<organism>
    <name type="scientific">Bacillus thuringiensis (strain Al Hakam)</name>
    <dbReference type="NCBI Taxonomy" id="412694"/>
    <lineage>
        <taxon>Bacteria</taxon>
        <taxon>Bacillati</taxon>
        <taxon>Bacillota</taxon>
        <taxon>Bacilli</taxon>
        <taxon>Bacillales</taxon>
        <taxon>Bacillaceae</taxon>
        <taxon>Bacillus</taxon>
        <taxon>Bacillus cereus group</taxon>
    </lineage>
</organism>
<dbReference type="EC" id="6.3.3.1" evidence="1"/>
<dbReference type="EMBL" id="CP000485">
    <property type="protein sequence ID" value="ABK83691.1"/>
    <property type="molecule type" value="Genomic_DNA"/>
</dbReference>
<dbReference type="RefSeq" id="WP_001262436.1">
    <property type="nucleotide sequence ID" value="NC_008600.1"/>
</dbReference>
<dbReference type="SMR" id="A0R8Z8"/>
<dbReference type="GeneID" id="45020355"/>
<dbReference type="KEGG" id="btl:BALH_0290"/>
<dbReference type="HOGENOM" id="CLU_047116_0_0_9"/>
<dbReference type="UniPathway" id="UPA00074">
    <property type="reaction ID" value="UER00129"/>
</dbReference>
<dbReference type="GO" id="GO:0005829">
    <property type="term" value="C:cytosol"/>
    <property type="evidence" value="ECO:0007669"/>
    <property type="project" value="TreeGrafter"/>
</dbReference>
<dbReference type="GO" id="GO:0005524">
    <property type="term" value="F:ATP binding"/>
    <property type="evidence" value="ECO:0007669"/>
    <property type="project" value="UniProtKB-KW"/>
</dbReference>
<dbReference type="GO" id="GO:0004637">
    <property type="term" value="F:phosphoribosylamine-glycine ligase activity"/>
    <property type="evidence" value="ECO:0007669"/>
    <property type="project" value="TreeGrafter"/>
</dbReference>
<dbReference type="GO" id="GO:0004641">
    <property type="term" value="F:phosphoribosylformylglycinamidine cyclo-ligase activity"/>
    <property type="evidence" value="ECO:0007669"/>
    <property type="project" value="UniProtKB-UniRule"/>
</dbReference>
<dbReference type="GO" id="GO:0006189">
    <property type="term" value="P:'de novo' IMP biosynthetic process"/>
    <property type="evidence" value="ECO:0007669"/>
    <property type="project" value="UniProtKB-UniRule"/>
</dbReference>
<dbReference type="GO" id="GO:0046084">
    <property type="term" value="P:adenine biosynthetic process"/>
    <property type="evidence" value="ECO:0007669"/>
    <property type="project" value="TreeGrafter"/>
</dbReference>
<dbReference type="CDD" id="cd02196">
    <property type="entry name" value="PurM"/>
    <property type="match status" value="1"/>
</dbReference>
<dbReference type="FunFam" id="3.30.1330.10:FF:000001">
    <property type="entry name" value="Phosphoribosylformylglycinamidine cyclo-ligase"/>
    <property type="match status" value="1"/>
</dbReference>
<dbReference type="FunFam" id="3.90.650.10:FF:000001">
    <property type="entry name" value="Phosphoribosylformylglycinamidine cyclo-ligase"/>
    <property type="match status" value="1"/>
</dbReference>
<dbReference type="Gene3D" id="3.90.650.10">
    <property type="entry name" value="PurM-like C-terminal domain"/>
    <property type="match status" value="1"/>
</dbReference>
<dbReference type="Gene3D" id="3.30.1330.10">
    <property type="entry name" value="PurM-like, N-terminal domain"/>
    <property type="match status" value="1"/>
</dbReference>
<dbReference type="HAMAP" id="MF_00741">
    <property type="entry name" value="AIRS"/>
    <property type="match status" value="1"/>
</dbReference>
<dbReference type="InterPro" id="IPR010918">
    <property type="entry name" value="PurM-like_C_dom"/>
</dbReference>
<dbReference type="InterPro" id="IPR036676">
    <property type="entry name" value="PurM-like_C_sf"/>
</dbReference>
<dbReference type="InterPro" id="IPR016188">
    <property type="entry name" value="PurM-like_N"/>
</dbReference>
<dbReference type="InterPro" id="IPR036921">
    <property type="entry name" value="PurM-like_N_sf"/>
</dbReference>
<dbReference type="InterPro" id="IPR004733">
    <property type="entry name" value="PurM_cligase"/>
</dbReference>
<dbReference type="NCBIfam" id="TIGR00878">
    <property type="entry name" value="purM"/>
    <property type="match status" value="1"/>
</dbReference>
<dbReference type="PANTHER" id="PTHR10520:SF12">
    <property type="entry name" value="TRIFUNCTIONAL PURINE BIOSYNTHETIC PROTEIN ADENOSINE-3"/>
    <property type="match status" value="1"/>
</dbReference>
<dbReference type="PANTHER" id="PTHR10520">
    <property type="entry name" value="TRIFUNCTIONAL PURINE BIOSYNTHETIC PROTEIN ADENOSINE-3-RELATED"/>
    <property type="match status" value="1"/>
</dbReference>
<dbReference type="Pfam" id="PF00586">
    <property type="entry name" value="AIRS"/>
    <property type="match status" value="1"/>
</dbReference>
<dbReference type="Pfam" id="PF02769">
    <property type="entry name" value="AIRS_C"/>
    <property type="match status" value="1"/>
</dbReference>
<dbReference type="SUPFAM" id="SSF56042">
    <property type="entry name" value="PurM C-terminal domain-like"/>
    <property type="match status" value="1"/>
</dbReference>
<dbReference type="SUPFAM" id="SSF55326">
    <property type="entry name" value="PurM N-terminal domain-like"/>
    <property type="match status" value="1"/>
</dbReference>
<proteinExistence type="inferred from homology"/>
<comment type="catalytic activity">
    <reaction evidence="1">
        <text>2-formamido-N(1)-(5-O-phospho-beta-D-ribosyl)acetamidine + ATP = 5-amino-1-(5-phospho-beta-D-ribosyl)imidazole + ADP + phosphate + H(+)</text>
        <dbReference type="Rhea" id="RHEA:23032"/>
        <dbReference type="ChEBI" id="CHEBI:15378"/>
        <dbReference type="ChEBI" id="CHEBI:30616"/>
        <dbReference type="ChEBI" id="CHEBI:43474"/>
        <dbReference type="ChEBI" id="CHEBI:137981"/>
        <dbReference type="ChEBI" id="CHEBI:147287"/>
        <dbReference type="ChEBI" id="CHEBI:456216"/>
        <dbReference type="EC" id="6.3.3.1"/>
    </reaction>
</comment>
<comment type="pathway">
    <text evidence="1">Purine metabolism; IMP biosynthesis via de novo pathway; 5-amino-1-(5-phospho-D-ribosyl)imidazole from N(2)-formyl-N(1)-(5-phospho-D-ribosyl)glycinamide: step 2/2.</text>
</comment>
<comment type="subcellular location">
    <subcellularLocation>
        <location evidence="1">Cytoplasm</location>
    </subcellularLocation>
</comment>
<comment type="similarity">
    <text evidence="1">Belongs to the AIR synthase family.</text>
</comment>
<reference key="1">
    <citation type="journal article" date="2007" name="J. Bacteriol.">
        <title>The complete genome sequence of Bacillus thuringiensis Al Hakam.</title>
        <authorList>
            <person name="Challacombe J.F."/>
            <person name="Altherr M.R."/>
            <person name="Xie G."/>
            <person name="Bhotika S.S."/>
            <person name="Brown N."/>
            <person name="Bruce D."/>
            <person name="Campbell C.S."/>
            <person name="Campbell M.L."/>
            <person name="Chen J."/>
            <person name="Chertkov O."/>
            <person name="Cleland C."/>
            <person name="Dimitrijevic M."/>
            <person name="Doggett N.A."/>
            <person name="Fawcett J.J."/>
            <person name="Glavina T."/>
            <person name="Goodwin L.A."/>
            <person name="Green L.D."/>
            <person name="Han C.S."/>
            <person name="Hill K.K."/>
            <person name="Hitchcock P."/>
            <person name="Jackson P.J."/>
            <person name="Keim P."/>
            <person name="Kewalramani A.R."/>
            <person name="Longmire J."/>
            <person name="Lucas S."/>
            <person name="Malfatti S."/>
            <person name="Martinez D."/>
            <person name="McMurry K."/>
            <person name="Meincke L.J."/>
            <person name="Misra M."/>
            <person name="Moseman B.L."/>
            <person name="Mundt M."/>
            <person name="Munk A.C."/>
            <person name="Okinaka R.T."/>
            <person name="Parson-Quintana B."/>
            <person name="Reilly L.P."/>
            <person name="Richardson P."/>
            <person name="Robinson D.L."/>
            <person name="Saunders E."/>
            <person name="Tapia R."/>
            <person name="Tesmer J.G."/>
            <person name="Thayer N."/>
            <person name="Thompson L.S."/>
            <person name="Tice H."/>
            <person name="Ticknor L.O."/>
            <person name="Wills P.L."/>
            <person name="Gilna P."/>
            <person name="Brettin T.S."/>
        </authorList>
    </citation>
    <scope>NUCLEOTIDE SEQUENCE [LARGE SCALE GENOMIC DNA]</scope>
    <source>
        <strain>Al Hakam</strain>
    </source>
</reference>
<accession>A0R8Z8</accession>
<protein>
    <recommendedName>
        <fullName evidence="1">Phosphoribosylformylglycinamidine cyclo-ligase</fullName>
        <ecNumber evidence="1">6.3.3.1</ecNumber>
    </recommendedName>
    <alternativeName>
        <fullName evidence="1">AIR synthase</fullName>
    </alternativeName>
    <alternativeName>
        <fullName evidence="1">AIRS</fullName>
    </alternativeName>
    <alternativeName>
        <fullName evidence="1">Phosphoribosyl-aminoimidazole synthetase</fullName>
    </alternativeName>
</protein>
<gene>
    <name evidence="1" type="primary">purM</name>
    <name type="ordered locus">BALH_0290</name>
</gene>
<name>PUR5_BACAH</name>
<keyword id="KW-0067">ATP-binding</keyword>
<keyword id="KW-0963">Cytoplasm</keyword>
<keyword id="KW-0436">Ligase</keyword>
<keyword id="KW-0547">Nucleotide-binding</keyword>
<keyword id="KW-0658">Purine biosynthesis</keyword>
<feature type="chain" id="PRO_1000046421" description="Phosphoribosylformylglycinamidine cyclo-ligase">
    <location>
        <begin position="1"/>
        <end position="346"/>
    </location>
</feature>
<sequence>MANAYKQAGVDIEAGYEAVSRMKKHVQTTMRKEVLGGLGGFGGMFDLSKFALEEPVLVSGTDGVGTKLMLAFMADKHDTIGIDAVAMCVNDIVVQGAEPLFFLDYIACGKAEPSKIENIVKGISEGCRQAGCALIGGETAEMPGMYSTEEYDLAGFTVGIVDKKKIVTGEKIEAGHVLIGLASSGIHSNGYSLVRKVLLEDGELSLDRIYGRLELPLGEELLKPTKIYVKPILELLKNHEVYGMAHITGGGFIENIPRMLPEGIGAEIELGSWKIQPIFSLLQEVGKLEEKEMFNIFNMGIGMVVAVKEEDAKDIVRLLEEQGETARIIGRTVQGAGVTFNGGKAL</sequence>
<evidence type="ECO:0000255" key="1">
    <source>
        <dbReference type="HAMAP-Rule" id="MF_00741"/>
    </source>
</evidence>